<organism>
    <name type="scientific">Acinetobacter baumannii (strain ATCC 17978 / DSM 105126 / CIP 53.77 / LMG 1025 / NCDC KC755 / 5377)</name>
    <dbReference type="NCBI Taxonomy" id="400667"/>
    <lineage>
        <taxon>Bacteria</taxon>
        <taxon>Pseudomonadati</taxon>
        <taxon>Pseudomonadota</taxon>
        <taxon>Gammaproteobacteria</taxon>
        <taxon>Moraxellales</taxon>
        <taxon>Moraxellaceae</taxon>
        <taxon>Acinetobacter</taxon>
        <taxon>Acinetobacter calcoaceticus/baumannii complex</taxon>
    </lineage>
</organism>
<accession>A3M208</accession>
<keyword id="KW-0004">4Fe-4S</keyword>
<keyword id="KW-0963">Cytoplasm</keyword>
<keyword id="KW-1015">Disulfide bond</keyword>
<keyword id="KW-0408">Iron</keyword>
<keyword id="KW-0411">Iron-sulfur</keyword>
<keyword id="KW-0479">Metal-binding</keyword>
<keyword id="KW-0489">Methyltransferase</keyword>
<keyword id="KW-0698">rRNA processing</keyword>
<keyword id="KW-0949">S-adenosyl-L-methionine</keyword>
<keyword id="KW-0808">Transferase</keyword>
<keyword id="KW-0819">tRNA processing</keyword>
<name>RLMN_ACIBT</name>
<reference key="1">
    <citation type="journal article" date="2007" name="Genes Dev.">
        <title>New insights into Acinetobacter baumannii pathogenesis revealed by high-density pyrosequencing and transposon mutagenesis.</title>
        <authorList>
            <person name="Smith M.G."/>
            <person name="Gianoulis T.A."/>
            <person name="Pukatzki S."/>
            <person name="Mekalanos J.J."/>
            <person name="Ornston L.N."/>
            <person name="Gerstein M."/>
            <person name="Snyder M."/>
        </authorList>
    </citation>
    <scope>NUCLEOTIDE SEQUENCE [LARGE SCALE GENOMIC DNA]</scope>
    <source>
        <strain>ATCC 17978 / DSM 105126 / CIP 53.77 / LMG 1025 / NCDC KC755 / 5377</strain>
    </source>
</reference>
<protein>
    <recommendedName>
        <fullName evidence="1">Dual-specificity RNA methyltransferase RlmN</fullName>
        <ecNumber evidence="1">2.1.1.192</ecNumber>
    </recommendedName>
    <alternativeName>
        <fullName evidence="1">23S rRNA (adenine(2503)-C(2))-methyltransferase</fullName>
    </alternativeName>
    <alternativeName>
        <fullName evidence="1">23S rRNA m2A2503 methyltransferase</fullName>
    </alternativeName>
    <alternativeName>
        <fullName evidence="1">Ribosomal RNA large subunit methyltransferase N</fullName>
    </alternativeName>
    <alternativeName>
        <fullName evidence="1">tRNA (adenine(37)-C(2))-methyltransferase</fullName>
    </alternativeName>
    <alternativeName>
        <fullName evidence="1">tRNA m2A37 methyltransferase</fullName>
    </alternativeName>
</protein>
<feature type="chain" id="PRO_0000349998" description="Dual-specificity RNA methyltransferase RlmN">
    <location>
        <begin position="1"/>
        <end position="410"/>
    </location>
</feature>
<feature type="domain" description="Radical SAM core" evidence="2">
    <location>
        <begin position="130"/>
        <end position="373"/>
    </location>
</feature>
<feature type="region of interest" description="Disordered" evidence="3">
    <location>
        <begin position="7"/>
        <end position="26"/>
    </location>
</feature>
<feature type="compositionally biased region" description="Low complexity" evidence="3">
    <location>
        <begin position="15"/>
        <end position="26"/>
    </location>
</feature>
<feature type="active site" description="Proton acceptor" evidence="1">
    <location>
        <position position="120"/>
    </location>
</feature>
<feature type="active site" description="S-methylcysteine intermediate" evidence="1">
    <location>
        <position position="378"/>
    </location>
</feature>
<feature type="binding site" evidence="1">
    <location>
        <position position="144"/>
    </location>
    <ligand>
        <name>[4Fe-4S] cluster</name>
        <dbReference type="ChEBI" id="CHEBI:49883"/>
        <note>4Fe-4S-S-AdoMet</note>
    </ligand>
</feature>
<feature type="binding site" evidence="1">
    <location>
        <position position="148"/>
    </location>
    <ligand>
        <name>[4Fe-4S] cluster</name>
        <dbReference type="ChEBI" id="CHEBI:49883"/>
        <note>4Fe-4S-S-AdoMet</note>
    </ligand>
</feature>
<feature type="binding site" evidence="1">
    <location>
        <position position="151"/>
    </location>
    <ligand>
        <name>[4Fe-4S] cluster</name>
        <dbReference type="ChEBI" id="CHEBI:49883"/>
        <note>4Fe-4S-S-AdoMet</note>
    </ligand>
</feature>
<feature type="binding site" evidence="1">
    <location>
        <begin position="200"/>
        <end position="201"/>
    </location>
    <ligand>
        <name>S-adenosyl-L-methionine</name>
        <dbReference type="ChEBI" id="CHEBI:59789"/>
    </ligand>
</feature>
<feature type="binding site" evidence="1">
    <location>
        <position position="232"/>
    </location>
    <ligand>
        <name>S-adenosyl-L-methionine</name>
        <dbReference type="ChEBI" id="CHEBI:59789"/>
    </ligand>
</feature>
<feature type="binding site" evidence="1">
    <location>
        <begin position="254"/>
        <end position="256"/>
    </location>
    <ligand>
        <name>S-adenosyl-L-methionine</name>
        <dbReference type="ChEBI" id="CHEBI:59789"/>
    </ligand>
</feature>
<feature type="binding site" evidence="1">
    <location>
        <position position="335"/>
    </location>
    <ligand>
        <name>S-adenosyl-L-methionine</name>
        <dbReference type="ChEBI" id="CHEBI:59789"/>
    </ligand>
</feature>
<feature type="disulfide bond" description="(transient)" evidence="1">
    <location>
        <begin position="137"/>
        <end position="378"/>
    </location>
</feature>
<comment type="function">
    <text evidence="1">Specifically methylates position 2 of adenine 2503 in 23S rRNA and position 2 of adenine 37 in tRNAs. m2A2503 modification seems to play a crucial role in the proofreading step occurring at the peptidyl transferase center and thus would serve to optimize ribosomal fidelity.</text>
</comment>
<comment type="catalytic activity">
    <reaction evidence="1">
        <text>adenosine(2503) in 23S rRNA + 2 reduced [2Fe-2S]-[ferredoxin] + 2 S-adenosyl-L-methionine = 2-methyladenosine(2503) in 23S rRNA + 5'-deoxyadenosine + L-methionine + 2 oxidized [2Fe-2S]-[ferredoxin] + S-adenosyl-L-homocysteine</text>
        <dbReference type="Rhea" id="RHEA:42916"/>
        <dbReference type="Rhea" id="RHEA-COMP:10000"/>
        <dbReference type="Rhea" id="RHEA-COMP:10001"/>
        <dbReference type="Rhea" id="RHEA-COMP:10152"/>
        <dbReference type="Rhea" id="RHEA-COMP:10282"/>
        <dbReference type="ChEBI" id="CHEBI:17319"/>
        <dbReference type="ChEBI" id="CHEBI:33737"/>
        <dbReference type="ChEBI" id="CHEBI:33738"/>
        <dbReference type="ChEBI" id="CHEBI:57844"/>
        <dbReference type="ChEBI" id="CHEBI:57856"/>
        <dbReference type="ChEBI" id="CHEBI:59789"/>
        <dbReference type="ChEBI" id="CHEBI:74411"/>
        <dbReference type="ChEBI" id="CHEBI:74497"/>
        <dbReference type="EC" id="2.1.1.192"/>
    </reaction>
</comment>
<comment type="catalytic activity">
    <reaction evidence="1">
        <text>adenosine(37) in tRNA + 2 reduced [2Fe-2S]-[ferredoxin] + 2 S-adenosyl-L-methionine = 2-methyladenosine(37) in tRNA + 5'-deoxyadenosine + L-methionine + 2 oxidized [2Fe-2S]-[ferredoxin] + S-adenosyl-L-homocysteine</text>
        <dbReference type="Rhea" id="RHEA:43332"/>
        <dbReference type="Rhea" id="RHEA-COMP:10000"/>
        <dbReference type="Rhea" id="RHEA-COMP:10001"/>
        <dbReference type="Rhea" id="RHEA-COMP:10162"/>
        <dbReference type="Rhea" id="RHEA-COMP:10485"/>
        <dbReference type="ChEBI" id="CHEBI:17319"/>
        <dbReference type="ChEBI" id="CHEBI:33737"/>
        <dbReference type="ChEBI" id="CHEBI:33738"/>
        <dbReference type="ChEBI" id="CHEBI:57844"/>
        <dbReference type="ChEBI" id="CHEBI:57856"/>
        <dbReference type="ChEBI" id="CHEBI:59789"/>
        <dbReference type="ChEBI" id="CHEBI:74411"/>
        <dbReference type="ChEBI" id="CHEBI:74497"/>
        <dbReference type="EC" id="2.1.1.192"/>
    </reaction>
</comment>
<comment type="cofactor">
    <cofactor evidence="1">
        <name>[4Fe-4S] cluster</name>
        <dbReference type="ChEBI" id="CHEBI:49883"/>
    </cofactor>
    <text evidence="1">Binds 1 [4Fe-4S] cluster. The cluster is coordinated with 3 cysteines and an exchangeable S-adenosyl-L-methionine.</text>
</comment>
<comment type="subcellular location">
    <subcellularLocation>
        <location evidence="1">Cytoplasm</location>
    </subcellularLocation>
</comment>
<comment type="miscellaneous">
    <text evidence="1">Reaction proceeds by a ping-pong mechanism involving intermediate methylation of a conserved cysteine residue.</text>
</comment>
<comment type="similarity">
    <text evidence="1">Belongs to the radical SAM superfamily. RlmN family.</text>
</comment>
<proteinExistence type="inferred from homology"/>
<sequence>MSSAVVVSSENLDGQQQSSSTPASPAAEKVNLLGMSRAELEKFFEDIGEKKFRAGQVMKWIHQYFVTDFAEMTNISGKLRAKLEQICEIKAPEVVHRHYSKDGTRKWVFRVGEGSGSLVETVLIPAEDKTGSRKTLCISSQVGCALDCSFCSTGKQGFQRDLTPDEIIGQLWMANYSYMEEVPVAERERSVTNVVMMGMGEPLLNYDAVLSSMHIMLDDFAYGMSKRRVTLSTSGVVPKIDQLAKDIDVALAISLHAPNDELRNELVPINKKYPLAQLIAACQRYIAKDGNESARKHVTIEYVMLEGVNDQPEHAQQLLKLLKNLPSKINLIPFNPFPHAPYGRSSRNRIISFQKTLSDAGFVCTIRQTRGDDIDAACGQLVGQVADRTRRAEQWQKKVAQRQEILRTQG</sequence>
<evidence type="ECO:0000255" key="1">
    <source>
        <dbReference type="HAMAP-Rule" id="MF_01849"/>
    </source>
</evidence>
<evidence type="ECO:0000255" key="2">
    <source>
        <dbReference type="PROSITE-ProRule" id="PRU01266"/>
    </source>
</evidence>
<evidence type="ECO:0000256" key="3">
    <source>
        <dbReference type="SAM" id="MobiDB-lite"/>
    </source>
</evidence>
<dbReference type="EC" id="2.1.1.192" evidence="1"/>
<dbReference type="EMBL" id="CP000521">
    <property type="protein sequence ID" value="ABO10952.2"/>
    <property type="molecule type" value="Genomic_DNA"/>
</dbReference>
<dbReference type="RefSeq" id="WP_000093084.1">
    <property type="nucleotide sequence ID" value="NZ_CP053098.1"/>
</dbReference>
<dbReference type="SMR" id="A3M208"/>
<dbReference type="GeneID" id="92892502"/>
<dbReference type="KEGG" id="acb:A1S_0499"/>
<dbReference type="HOGENOM" id="CLU_029101_0_0_6"/>
<dbReference type="GO" id="GO:0005737">
    <property type="term" value="C:cytoplasm"/>
    <property type="evidence" value="ECO:0007669"/>
    <property type="project" value="UniProtKB-SubCell"/>
</dbReference>
<dbReference type="GO" id="GO:0051539">
    <property type="term" value="F:4 iron, 4 sulfur cluster binding"/>
    <property type="evidence" value="ECO:0007669"/>
    <property type="project" value="UniProtKB-UniRule"/>
</dbReference>
<dbReference type="GO" id="GO:0046872">
    <property type="term" value="F:metal ion binding"/>
    <property type="evidence" value="ECO:0007669"/>
    <property type="project" value="UniProtKB-KW"/>
</dbReference>
<dbReference type="GO" id="GO:0070040">
    <property type="term" value="F:rRNA (adenine(2503)-C2-)-methyltransferase activity"/>
    <property type="evidence" value="ECO:0007669"/>
    <property type="project" value="UniProtKB-UniRule"/>
</dbReference>
<dbReference type="GO" id="GO:0019843">
    <property type="term" value="F:rRNA binding"/>
    <property type="evidence" value="ECO:0007669"/>
    <property type="project" value="UniProtKB-UniRule"/>
</dbReference>
<dbReference type="GO" id="GO:0002935">
    <property type="term" value="F:tRNA (adenine(37)-C2)-methyltransferase activity"/>
    <property type="evidence" value="ECO:0007669"/>
    <property type="project" value="UniProtKB-UniRule"/>
</dbReference>
<dbReference type="GO" id="GO:0000049">
    <property type="term" value="F:tRNA binding"/>
    <property type="evidence" value="ECO:0007669"/>
    <property type="project" value="UniProtKB-UniRule"/>
</dbReference>
<dbReference type="GO" id="GO:0070475">
    <property type="term" value="P:rRNA base methylation"/>
    <property type="evidence" value="ECO:0007669"/>
    <property type="project" value="UniProtKB-UniRule"/>
</dbReference>
<dbReference type="GO" id="GO:0030488">
    <property type="term" value="P:tRNA methylation"/>
    <property type="evidence" value="ECO:0007669"/>
    <property type="project" value="UniProtKB-UniRule"/>
</dbReference>
<dbReference type="CDD" id="cd01335">
    <property type="entry name" value="Radical_SAM"/>
    <property type="match status" value="1"/>
</dbReference>
<dbReference type="FunFam" id="1.10.150.530:FF:000003">
    <property type="entry name" value="Dual-specificity RNA methyltransferase RlmN"/>
    <property type="match status" value="1"/>
</dbReference>
<dbReference type="FunFam" id="3.20.20.70:FF:000008">
    <property type="entry name" value="Dual-specificity RNA methyltransferase RlmN"/>
    <property type="match status" value="1"/>
</dbReference>
<dbReference type="Gene3D" id="1.10.150.530">
    <property type="match status" value="1"/>
</dbReference>
<dbReference type="Gene3D" id="3.20.20.70">
    <property type="entry name" value="Aldolase class I"/>
    <property type="match status" value="1"/>
</dbReference>
<dbReference type="HAMAP" id="MF_01849">
    <property type="entry name" value="RNA_methyltr_RlmN"/>
    <property type="match status" value="1"/>
</dbReference>
<dbReference type="InterPro" id="IPR013785">
    <property type="entry name" value="Aldolase_TIM"/>
</dbReference>
<dbReference type="InterPro" id="IPR040072">
    <property type="entry name" value="Methyltransferase_A"/>
</dbReference>
<dbReference type="InterPro" id="IPR048641">
    <property type="entry name" value="RlmN_N"/>
</dbReference>
<dbReference type="InterPro" id="IPR027492">
    <property type="entry name" value="RNA_MTrfase_RlmN"/>
</dbReference>
<dbReference type="InterPro" id="IPR004383">
    <property type="entry name" value="rRNA_lsu_MTrfase_RlmN/Cfr"/>
</dbReference>
<dbReference type="InterPro" id="IPR007197">
    <property type="entry name" value="rSAM"/>
</dbReference>
<dbReference type="NCBIfam" id="TIGR00048">
    <property type="entry name" value="rRNA_mod_RlmN"/>
    <property type="match status" value="1"/>
</dbReference>
<dbReference type="PANTHER" id="PTHR30544">
    <property type="entry name" value="23S RRNA METHYLTRANSFERASE"/>
    <property type="match status" value="1"/>
</dbReference>
<dbReference type="PANTHER" id="PTHR30544:SF5">
    <property type="entry name" value="RADICAL SAM CORE DOMAIN-CONTAINING PROTEIN"/>
    <property type="match status" value="1"/>
</dbReference>
<dbReference type="Pfam" id="PF04055">
    <property type="entry name" value="Radical_SAM"/>
    <property type="match status" value="1"/>
</dbReference>
<dbReference type="Pfam" id="PF21016">
    <property type="entry name" value="RlmN_N"/>
    <property type="match status" value="1"/>
</dbReference>
<dbReference type="PIRSF" id="PIRSF006004">
    <property type="entry name" value="CHP00048"/>
    <property type="match status" value="1"/>
</dbReference>
<dbReference type="SFLD" id="SFLDF00275">
    <property type="entry name" value="adenosine_C2_methyltransferase"/>
    <property type="match status" value="1"/>
</dbReference>
<dbReference type="SFLD" id="SFLDG01062">
    <property type="entry name" value="methyltransferase_(Class_A)"/>
    <property type="match status" value="1"/>
</dbReference>
<dbReference type="SUPFAM" id="SSF102114">
    <property type="entry name" value="Radical SAM enzymes"/>
    <property type="match status" value="1"/>
</dbReference>
<dbReference type="PROSITE" id="PS51918">
    <property type="entry name" value="RADICAL_SAM"/>
    <property type="match status" value="1"/>
</dbReference>
<gene>
    <name evidence="1" type="primary">rlmN</name>
    <name type="ordered locus">A1S_0499</name>
</gene>